<feature type="chain" id="PRO_0000171221" description="Serine/threonine-protein kinase PknJ">
    <location>
        <begin position="1"/>
        <end position="589"/>
    </location>
</feature>
<feature type="topological domain" description="Cytoplasmic" evidence="2">
    <location>
        <begin position="1"/>
        <end position="342"/>
    </location>
</feature>
<feature type="transmembrane region" description="Helical" evidence="2">
    <location>
        <begin position="343"/>
        <end position="363"/>
    </location>
</feature>
<feature type="topological domain" description="Extracellular" evidence="2">
    <location>
        <begin position="364"/>
        <end position="589"/>
    </location>
</feature>
<feature type="domain" description="Protein kinase" evidence="3">
    <location>
        <begin position="14"/>
        <end position="276"/>
    </location>
</feature>
<feature type="region of interest" description="Disordered" evidence="5">
    <location>
        <begin position="365"/>
        <end position="400"/>
    </location>
</feature>
<feature type="compositionally biased region" description="Low complexity" evidence="5">
    <location>
        <begin position="365"/>
        <end position="387"/>
    </location>
</feature>
<feature type="active site" description="Proton acceptor" evidence="3 4">
    <location>
        <position position="136"/>
    </location>
</feature>
<feature type="binding site" evidence="3">
    <location>
        <begin position="20"/>
        <end position="28"/>
    </location>
    <ligand>
        <name>ATP</name>
        <dbReference type="ChEBI" id="CHEBI:30616"/>
    </ligand>
</feature>
<feature type="binding site" evidence="3">
    <location>
        <position position="43"/>
    </location>
    <ligand>
        <name>ATP</name>
        <dbReference type="ChEBI" id="CHEBI:30616"/>
    </ligand>
</feature>
<reference key="1">
    <citation type="journal article" date="2003" name="Proc. Natl. Acad. Sci. U.S.A.">
        <title>The complete genome sequence of Mycobacterium bovis.</title>
        <authorList>
            <person name="Garnier T."/>
            <person name="Eiglmeier K."/>
            <person name="Camus J.-C."/>
            <person name="Medina N."/>
            <person name="Mansoor H."/>
            <person name="Pryor M."/>
            <person name="Duthoy S."/>
            <person name="Grondin S."/>
            <person name="Lacroix C."/>
            <person name="Monsempe C."/>
            <person name="Simon S."/>
            <person name="Harris B."/>
            <person name="Atkin R."/>
            <person name="Doggett J."/>
            <person name="Mayes R."/>
            <person name="Keating L."/>
            <person name="Wheeler P.R."/>
            <person name="Parkhill J."/>
            <person name="Barrell B.G."/>
            <person name="Cole S.T."/>
            <person name="Gordon S.V."/>
            <person name="Hewinson R.G."/>
        </authorList>
    </citation>
    <scope>NUCLEOTIDE SEQUENCE [LARGE SCALE GENOMIC DNA]</scope>
    <source>
        <strain>ATCC BAA-935 / AF2122/97</strain>
    </source>
</reference>
<reference key="2">
    <citation type="journal article" date="2017" name="Genome Announc.">
        <title>Updated reference genome sequence and annotation of Mycobacterium bovis AF2122/97.</title>
        <authorList>
            <person name="Malone K.M."/>
            <person name="Farrell D."/>
            <person name="Stuber T.P."/>
            <person name="Schubert O.T."/>
            <person name="Aebersold R."/>
            <person name="Robbe-Austerman S."/>
            <person name="Gordon S.V."/>
        </authorList>
    </citation>
    <scope>NUCLEOTIDE SEQUENCE [LARGE SCALE GENOMIC DNA]</scope>
    <scope>GENOME REANNOTATION</scope>
    <source>
        <strain>ATCC BAA-935 / AF2122/97</strain>
    </source>
</reference>
<accession>P65733</accession>
<accession>A0A1R3Y092</accession>
<accession>Q10697</accession>
<accession>X2BK37</accession>
<comment type="catalytic activity">
    <reaction>
        <text>L-seryl-[protein] + ATP = O-phospho-L-seryl-[protein] + ADP + H(+)</text>
        <dbReference type="Rhea" id="RHEA:17989"/>
        <dbReference type="Rhea" id="RHEA-COMP:9863"/>
        <dbReference type="Rhea" id="RHEA-COMP:11604"/>
        <dbReference type="ChEBI" id="CHEBI:15378"/>
        <dbReference type="ChEBI" id="CHEBI:29999"/>
        <dbReference type="ChEBI" id="CHEBI:30616"/>
        <dbReference type="ChEBI" id="CHEBI:83421"/>
        <dbReference type="ChEBI" id="CHEBI:456216"/>
        <dbReference type="EC" id="2.7.11.1"/>
    </reaction>
</comment>
<comment type="catalytic activity">
    <reaction>
        <text>L-threonyl-[protein] + ATP = O-phospho-L-threonyl-[protein] + ADP + H(+)</text>
        <dbReference type="Rhea" id="RHEA:46608"/>
        <dbReference type="Rhea" id="RHEA-COMP:11060"/>
        <dbReference type="Rhea" id="RHEA-COMP:11605"/>
        <dbReference type="ChEBI" id="CHEBI:15378"/>
        <dbReference type="ChEBI" id="CHEBI:30013"/>
        <dbReference type="ChEBI" id="CHEBI:30616"/>
        <dbReference type="ChEBI" id="CHEBI:61977"/>
        <dbReference type="ChEBI" id="CHEBI:456216"/>
        <dbReference type="EC" id="2.7.11.1"/>
    </reaction>
</comment>
<comment type="subunit">
    <text evidence="1">Homodimer.</text>
</comment>
<comment type="subcellular location">
    <subcellularLocation>
        <location evidence="1">Cell membrane</location>
        <topology evidence="1">Single-pass membrane protein</topology>
    </subcellularLocation>
</comment>
<comment type="similarity">
    <text evidence="3">Belongs to the protein kinase superfamily. Ser/Thr protein kinase family.</text>
</comment>
<evidence type="ECO:0000250" key="1"/>
<evidence type="ECO:0000255" key="2"/>
<evidence type="ECO:0000255" key="3">
    <source>
        <dbReference type="PROSITE-ProRule" id="PRU00159"/>
    </source>
</evidence>
<evidence type="ECO:0000255" key="4">
    <source>
        <dbReference type="PROSITE-ProRule" id="PRU10027"/>
    </source>
</evidence>
<evidence type="ECO:0000256" key="5">
    <source>
        <dbReference type="SAM" id="MobiDB-lite"/>
    </source>
</evidence>
<protein>
    <recommendedName>
        <fullName>Serine/threonine-protein kinase PknJ</fullName>
        <ecNumber>2.7.11.1</ecNumber>
    </recommendedName>
</protein>
<proteinExistence type="inferred from homology"/>
<keyword id="KW-0067">ATP-binding</keyword>
<keyword id="KW-1003">Cell membrane</keyword>
<keyword id="KW-0418">Kinase</keyword>
<keyword id="KW-0472">Membrane</keyword>
<keyword id="KW-0547">Nucleotide-binding</keyword>
<keyword id="KW-1185">Reference proteome</keyword>
<keyword id="KW-0723">Serine/threonine-protein kinase</keyword>
<keyword id="KW-0808">Transferase</keyword>
<keyword id="KW-0812">Transmembrane</keyword>
<keyword id="KW-1133">Transmembrane helix</keyword>
<sequence>MAHELSAGSVFAGYRIERMLGAGGMGTVYLARNPDLPRSEALKVLAAELSRDLDFRARFVREADVAAGLDHPNIVAVHQRGQFEGRLWIAMQFVDGGNAEDALRAATMTTARAVYVIGEVAKALDYAHQQGVIHRDIKPANFLLSRAAGGDERVLLSDFGIARALGDTGLTSTGSVLATLAYAAPEVLAGQGFDGRADLYSLGCALFRLLTGEAPFAAGAGAAVAVVAGHLHQPPPTVSDRVPGLSAAMDAVIATAMAKDPMRRFTSAGEFAHAAAAALYGGATDGWVPPSPAPHVISQGAVPGSPWWQHPVGSVTALATPPGHGWPPGLPPLPRRPRRYRRGVAAVAAVMVVAAAAVTAVTMTSHQPRTATPPSAAALSPTSSSTTPPQPPIVTRSRLPGLLPPLDDVKNFVGIQNLVAHEPMLQPQTPNGSINPAECWPAVGGGVPSAYDLGTVIGFYGLTIDEPPTGTAPNQVGQLIVAFRDAATAQRHLADLASIWRRCGGRTVTLFRSEWRRPVELSTSVPEVVDGITTMVLTAQGPVLRVREDHAIAAKNNVLVDVDIMTPDTSRGQQAVIGITNYILAKIPG</sequence>
<organism>
    <name type="scientific">Mycobacterium bovis (strain ATCC BAA-935 / AF2122/97)</name>
    <dbReference type="NCBI Taxonomy" id="233413"/>
    <lineage>
        <taxon>Bacteria</taxon>
        <taxon>Bacillati</taxon>
        <taxon>Actinomycetota</taxon>
        <taxon>Actinomycetes</taxon>
        <taxon>Mycobacteriales</taxon>
        <taxon>Mycobacteriaceae</taxon>
        <taxon>Mycobacterium</taxon>
        <taxon>Mycobacterium tuberculosis complex</taxon>
    </lineage>
</organism>
<gene>
    <name type="primary">pknJ</name>
    <name type="ordered locus">BQ2027_MB2115</name>
</gene>
<dbReference type="EC" id="2.7.11.1"/>
<dbReference type="EMBL" id="LT708304">
    <property type="protein sequence ID" value="SIU00722.1"/>
    <property type="molecule type" value="Genomic_DNA"/>
</dbReference>
<dbReference type="RefSeq" id="NP_855764.1">
    <property type="nucleotide sequence ID" value="NC_002945.3"/>
</dbReference>
<dbReference type="RefSeq" id="WP_003410735.1">
    <property type="nucleotide sequence ID" value="NC_002945.4"/>
</dbReference>
<dbReference type="SMR" id="P65733"/>
<dbReference type="KEGG" id="mbo:BQ2027_MB2115"/>
<dbReference type="PATRIC" id="fig|233413.5.peg.2325"/>
<dbReference type="Proteomes" id="UP000001419">
    <property type="component" value="Chromosome"/>
</dbReference>
<dbReference type="GO" id="GO:0005886">
    <property type="term" value="C:plasma membrane"/>
    <property type="evidence" value="ECO:0007669"/>
    <property type="project" value="UniProtKB-SubCell"/>
</dbReference>
<dbReference type="GO" id="GO:0005524">
    <property type="term" value="F:ATP binding"/>
    <property type="evidence" value="ECO:0007669"/>
    <property type="project" value="UniProtKB-KW"/>
</dbReference>
<dbReference type="GO" id="GO:0106310">
    <property type="term" value="F:protein serine kinase activity"/>
    <property type="evidence" value="ECO:0007669"/>
    <property type="project" value="RHEA"/>
</dbReference>
<dbReference type="GO" id="GO:0004674">
    <property type="term" value="F:protein serine/threonine kinase activity"/>
    <property type="evidence" value="ECO:0007669"/>
    <property type="project" value="UniProtKB-KW"/>
</dbReference>
<dbReference type="GO" id="GO:0080090">
    <property type="term" value="P:regulation of primary metabolic process"/>
    <property type="evidence" value="ECO:0007669"/>
    <property type="project" value="UniProtKB-ARBA"/>
</dbReference>
<dbReference type="CDD" id="cd14014">
    <property type="entry name" value="STKc_PknB_like"/>
    <property type="match status" value="1"/>
</dbReference>
<dbReference type="FunFam" id="1.10.510.10:FF:000021">
    <property type="entry name" value="Serine/threonine protein kinase"/>
    <property type="match status" value="1"/>
</dbReference>
<dbReference type="Gene3D" id="3.30.200.20">
    <property type="entry name" value="Phosphorylase Kinase, domain 1"/>
    <property type="match status" value="1"/>
</dbReference>
<dbReference type="Gene3D" id="3.40.1000.70">
    <property type="entry name" value="PknH-like extracellular domain"/>
    <property type="match status" value="1"/>
</dbReference>
<dbReference type="Gene3D" id="1.10.510.10">
    <property type="entry name" value="Transferase(Phosphotransferase) domain 1"/>
    <property type="match status" value="1"/>
</dbReference>
<dbReference type="InterPro" id="IPR011009">
    <property type="entry name" value="Kinase-like_dom_sf"/>
</dbReference>
<dbReference type="InterPro" id="IPR026954">
    <property type="entry name" value="PknH-like_Extracell"/>
</dbReference>
<dbReference type="InterPro" id="IPR038232">
    <property type="entry name" value="PknH-like_Extracell_sf"/>
</dbReference>
<dbReference type="InterPro" id="IPR000719">
    <property type="entry name" value="Prot_kinase_dom"/>
</dbReference>
<dbReference type="InterPro" id="IPR008271">
    <property type="entry name" value="Ser/Thr_kinase_AS"/>
</dbReference>
<dbReference type="PANTHER" id="PTHR43289">
    <property type="entry name" value="MITOGEN-ACTIVATED PROTEIN KINASE KINASE KINASE 20-RELATED"/>
    <property type="match status" value="1"/>
</dbReference>
<dbReference type="PANTHER" id="PTHR43289:SF6">
    <property type="entry name" value="SERINE_THREONINE-PROTEIN KINASE NEKL-3"/>
    <property type="match status" value="1"/>
</dbReference>
<dbReference type="Pfam" id="PF00069">
    <property type="entry name" value="Pkinase"/>
    <property type="match status" value="1"/>
</dbReference>
<dbReference type="Pfam" id="PF14032">
    <property type="entry name" value="PknH_C"/>
    <property type="match status" value="1"/>
</dbReference>
<dbReference type="SMART" id="SM00220">
    <property type="entry name" value="S_TKc"/>
    <property type="match status" value="1"/>
</dbReference>
<dbReference type="SUPFAM" id="SSF56112">
    <property type="entry name" value="Protein kinase-like (PK-like)"/>
    <property type="match status" value="1"/>
</dbReference>
<dbReference type="PROSITE" id="PS50011">
    <property type="entry name" value="PROTEIN_KINASE_DOM"/>
    <property type="match status" value="1"/>
</dbReference>
<dbReference type="PROSITE" id="PS00108">
    <property type="entry name" value="PROTEIN_KINASE_ST"/>
    <property type="match status" value="1"/>
</dbReference>
<name>PKNJ_MYCBO</name>